<sequence>MAATHLTSTSSLTINTLPSFEGLRSASGISKINVSVAYPSFTSRSFRGLVVRAASITTSKYTSVKPLGDRVLIKTKIVEEKTTSGIFLPTAAQKKPQSGEVVAIGSGKKVGDKKLPVAVKTGAEVVYSKYTGTEIEVDGSSHLIVKEDDIIGILETDDVKDLKPLNDRLLIKVAEVENKTSGGLLLAESSKEKPSFGTVVATGPGVLDEEGNRIPLPVCSGNTVLYSKYAGNDFKGVDGSDYMVLRVSDVMAVLS</sequence>
<proteinExistence type="evidence at transcript level"/>
<keyword id="KW-0143">Chaperone</keyword>
<keyword id="KW-0150">Chloroplast</keyword>
<keyword id="KW-0934">Plastid</keyword>
<keyword id="KW-1185">Reference proteome</keyword>
<keyword id="KW-0677">Repeat</keyword>
<keyword id="KW-0809">Transit peptide</keyword>
<accession>Q02073</accession>
<name>CH10C_SPIOL</name>
<comment type="function">
    <text>Seems to function only as a co-chaperone, along with cpn60, and in certain cases is essential for the discharge of biologically active proteins from cpn60.</text>
</comment>
<comment type="subunit">
    <text>Forms stable complexes with CPN60 in the presence of ATP.</text>
</comment>
<comment type="subcellular location">
    <subcellularLocation>
        <location>Plastid</location>
        <location>Chloroplast</location>
    </subcellularLocation>
</comment>
<comment type="similarity">
    <text evidence="2">Belongs to the GroES chaperonin family.</text>
</comment>
<feature type="transit peptide" description="Chloroplast" evidence="1">
    <location>
        <begin position="1"/>
        <end position="53"/>
    </location>
</feature>
<feature type="chain" id="PRO_0000005046" description="20 kDa chaperonin, chloroplastic">
    <location>
        <begin position="54"/>
        <end position="255"/>
    </location>
</feature>
<feature type="region of interest" description="Cpn-10 domain 1">
    <location>
        <begin position="54"/>
        <end position="156"/>
    </location>
</feature>
<feature type="region of interest" description="Cpn-10 domain 2">
    <location>
        <begin position="157"/>
        <end position="255"/>
    </location>
</feature>
<organism>
    <name type="scientific">Spinacia oleracea</name>
    <name type="common">Spinach</name>
    <dbReference type="NCBI Taxonomy" id="3562"/>
    <lineage>
        <taxon>Eukaryota</taxon>
        <taxon>Viridiplantae</taxon>
        <taxon>Streptophyta</taxon>
        <taxon>Embryophyta</taxon>
        <taxon>Tracheophyta</taxon>
        <taxon>Spermatophyta</taxon>
        <taxon>Magnoliopsida</taxon>
        <taxon>eudicotyledons</taxon>
        <taxon>Gunneridae</taxon>
        <taxon>Pentapetalae</taxon>
        <taxon>Caryophyllales</taxon>
        <taxon>Chenopodiaceae</taxon>
        <taxon>Chenopodioideae</taxon>
        <taxon>Anserineae</taxon>
        <taxon>Spinacia</taxon>
    </lineage>
</organism>
<evidence type="ECO:0000255" key="1"/>
<evidence type="ECO:0000305" key="2"/>
<reference key="1">
    <citation type="journal article" date="1992" name="Proc. Natl. Acad. Sci. U.S.A.">
        <title>Identification, characterization, and DNA sequence of a functional 'double' groES-like chaperonin from chloroplasts of higher plants.</title>
        <authorList>
            <person name="Bertsch U."/>
            <person name="Soll J."/>
            <person name="Seetharam R."/>
            <person name="Viitanen P.V."/>
        </authorList>
    </citation>
    <scope>NUCLEOTIDE SEQUENCE [MRNA]</scope>
</reference>
<dbReference type="EMBL" id="M87646">
    <property type="protein sequence ID" value="AAB59307.1"/>
    <property type="molecule type" value="mRNA"/>
</dbReference>
<dbReference type="PIR" id="A46176">
    <property type="entry name" value="A46176"/>
</dbReference>
<dbReference type="SMR" id="Q02073"/>
<dbReference type="OrthoDB" id="184876at2759"/>
<dbReference type="Proteomes" id="UP001155700">
    <property type="component" value="Unplaced"/>
</dbReference>
<dbReference type="GO" id="GO:0009507">
    <property type="term" value="C:chloroplast"/>
    <property type="evidence" value="ECO:0000318"/>
    <property type="project" value="GO_Central"/>
</dbReference>
<dbReference type="GO" id="GO:0005739">
    <property type="term" value="C:mitochondrion"/>
    <property type="evidence" value="ECO:0000318"/>
    <property type="project" value="GO_Central"/>
</dbReference>
<dbReference type="GO" id="GO:0005524">
    <property type="term" value="F:ATP binding"/>
    <property type="evidence" value="ECO:0007669"/>
    <property type="project" value="InterPro"/>
</dbReference>
<dbReference type="GO" id="GO:0046872">
    <property type="term" value="F:metal ion binding"/>
    <property type="evidence" value="ECO:0000318"/>
    <property type="project" value="GO_Central"/>
</dbReference>
<dbReference type="GO" id="GO:0044183">
    <property type="term" value="F:protein folding chaperone"/>
    <property type="evidence" value="ECO:0007669"/>
    <property type="project" value="InterPro"/>
</dbReference>
<dbReference type="GO" id="GO:0051087">
    <property type="term" value="F:protein-folding chaperone binding"/>
    <property type="evidence" value="ECO:0000318"/>
    <property type="project" value="GO_Central"/>
</dbReference>
<dbReference type="GO" id="GO:0046914">
    <property type="term" value="F:transition metal ion binding"/>
    <property type="evidence" value="ECO:0007669"/>
    <property type="project" value="InterPro"/>
</dbReference>
<dbReference type="GO" id="GO:0051082">
    <property type="term" value="F:unfolded protein binding"/>
    <property type="evidence" value="ECO:0000318"/>
    <property type="project" value="GO_Central"/>
</dbReference>
<dbReference type="GO" id="GO:0051085">
    <property type="term" value="P:chaperone cofactor-dependent protein refolding"/>
    <property type="evidence" value="ECO:0000318"/>
    <property type="project" value="GO_Central"/>
</dbReference>
<dbReference type="CDD" id="cd00320">
    <property type="entry name" value="cpn10"/>
    <property type="match status" value="2"/>
</dbReference>
<dbReference type="FunFam" id="2.30.33.40:FF:000001">
    <property type="entry name" value="10 kDa chaperonin"/>
    <property type="match status" value="2"/>
</dbReference>
<dbReference type="Gene3D" id="2.30.33.40">
    <property type="entry name" value="GroES chaperonin"/>
    <property type="match status" value="2"/>
</dbReference>
<dbReference type="HAMAP" id="MF_00580">
    <property type="entry name" value="CH10"/>
    <property type="match status" value="2"/>
</dbReference>
<dbReference type="InterPro" id="IPR020818">
    <property type="entry name" value="Chaperonin_GroES"/>
</dbReference>
<dbReference type="InterPro" id="IPR037124">
    <property type="entry name" value="Chaperonin_GroES_sf"/>
</dbReference>
<dbReference type="InterPro" id="IPR018369">
    <property type="entry name" value="Chaprnonin_Cpn10_CS"/>
</dbReference>
<dbReference type="InterPro" id="IPR017416">
    <property type="entry name" value="Cpn20"/>
</dbReference>
<dbReference type="InterPro" id="IPR011032">
    <property type="entry name" value="GroES-like_sf"/>
</dbReference>
<dbReference type="NCBIfam" id="NF001531">
    <property type="entry name" value="PRK00364.2-2"/>
    <property type="match status" value="2"/>
</dbReference>
<dbReference type="PANTHER" id="PTHR10772">
    <property type="entry name" value="10 KDA HEAT SHOCK PROTEIN"/>
    <property type="match status" value="1"/>
</dbReference>
<dbReference type="PANTHER" id="PTHR10772:SF65">
    <property type="entry name" value="20 KDA CHAPERONIN, CHLOROPLASTIC"/>
    <property type="match status" value="1"/>
</dbReference>
<dbReference type="Pfam" id="PF00166">
    <property type="entry name" value="Cpn10"/>
    <property type="match status" value="2"/>
</dbReference>
<dbReference type="PIRSF" id="PIRSF038157">
    <property type="entry name" value="Chaperonin_21_chloroplast"/>
    <property type="match status" value="1"/>
</dbReference>
<dbReference type="PRINTS" id="PR00297">
    <property type="entry name" value="CHAPERONIN10"/>
</dbReference>
<dbReference type="SMART" id="SM00883">
    <property type="entry name" value="Cpn10"/>
    <property type="match status" value="2"/>
</dbReference>
<dbReference type="SUPFAM" id="SSF50129">
    <property type="entry name" value="GroES-like"/>
    <property type="match status" value="2"/>
</dbReference>
<dbReference type="PROSITE" id="PS00681">
    <property type="entry name" value="CHAPERONINS_CPN10"/>
    <property type="match status" value="2"/>
</dbReference>
<gene>
    <name type="primary">CPN21</name>
    <name type="synonym">CHCPN10</name>
</gene>
<protein>
    <recommendedName>
        <fullName>20 kDa chaperonin, chloroplastic</fullName>
    </recommendedName>
    <alternativeName>
        <fullName>Chaperonin 10</fullName>
        <shortName>Ch-CPN10</shortName>
        <shortName>Cpn10</shortName>
    </alternativeName>
    <alternativeName>
        <fullName>Protein Cpn21</fullName>
    </alternativeName>
</protein>